<gene>
    <name evidence="1" type="primary">rpsM</name>
    <name type="ordered locus">ACP_1426</name>
</gene>
<sequence>MARVAGVDLPRNKQARIALTYIYGIGNPRALRILTAANVDPFRKIQDLSEDEVNRIRQVIEAEGQVEGDLRKDVAMHIKRLIEIQSYRGLRHRRSLPVRGQRTHTNARTRKGPRRGTVAGKKKATKT</sequence>
<reference key="1">
    <citation type="journal article" date="2009" name="Appl. Environ. Microbiol.">
        <title>Three genomes from the phylum Acidobacteria provide insight into the lifestyles of these microorganisms in soils.</title>
        <authorList>
            <person name="Ward N.L."/>
            <person name="Challacombe J.F."/>
            <person name="Janssen P.H."/>
            <person name="Henrissat B."/>
            <person name="Coutinho P.M."/>
            <person name="Wu M."/>
            <person name="Xie G."/>
            <person name="Haft D.H."/>
            <person name="Sait M."/>
            <person name="Badger J."/>
            <person name="Barabote R.D."/>
            <person name="Bradley B."/>
            <person name="Brettin T.S."/>
            <person name="Brinkac L.M."/>
            <person name="Bruce D."/>
            <person name="Creasy T."/>
            <person name="Daugherty S.C."/>
            <person name="Davidsen T.M."/>
            <person name="DeBoy R.T."/>
            <person name="Detter J.C."/>
            <person name="Dodson R.J."/>
            <person name="Durkin A.S."/>
            <person name="Ganapathy A."/>
            <person name="Gwinn-Giglio M."/>
            <person name="Han C.S."/>
            <person name="Khouri H."/>
            <person name="Kiss H."/>
            <person name="Kothari S.P."/>
            <person name="Madupu R."/>
            <person name="Nelson K.E."/>
            <person name="Nelson W.C."/>
            <person name="Paulsen I."/>
            <person name="Penn K."/>
            <person name="Ren Q."/>
            <person name="Rosovitz M.J."/>
            <person name="Selengut J.D."/>
            <person name="Shrivastava S."/>
            <person name="Sullivan S.A."/>
            <person name="Tapia R."/>
            <person name="Thompson L.S."/>
            <person name="Watkins K.L."/>
            <person name="Yang Q."/>
            <person name="Yu C."/>
            <person name="Zafar N."/>
            <person name="Zhou L."/>
            <person name="Kuske C.R."/>
        </authorList>
    </citation>
    <scope>NUCLEOTIDE SEQUENCE [LARGE SCALE GENOMIC DNA]</scope>
    <source>
        <strain>ATCC 51196 / DSM 11244 / BCRC 80197 / JCM 7670 / NBRC 15755 / NCIMB 13165 / 161</strain>
    </source>
</reference>
<protein>
    <recommendedName>
        <fullName evidence="1">Small ribosomal subunit protein uS13</fullName>
    </recommendedName>
    <alternativeName>
        <fullName evidence="3">30S ribosomal protein S13</fullName>
    </alternativeName>
</protein>
<accession>C1F617</accession>
<feature type="chain" id="PRO_1000165591" description="Small ribosomal subunit protein uS13">
    <location>
        <begin position="1"/>
        <end position="127"/>
    </location>
</feature>
<feature type="region of interest" description="Disordered" evidence="2">
    <location>
        <begin position="93"/>
        <end position="127"/>
    </location>
</feature>
<name>RS13_ACIC5</name>
<organism>
    <name type="scientific">Acidobacterium capsulatum (strain ATCC 51196 / DSM 11244 / BCRC 80197 / JCM 7670 / NBRC 15755 / NCIMB 13165 / 161)</name>
    <dbReference type="NCBI Taxonomy" id="240015"/>
    <lineage>
        <taxon>Bacteria</taxon>
        <taxon>Pseudomonadati</taxon>
        <taxon>Acidobacteriota</taxon>
        <taxon>Terriglobia</taxon>
        <taxon>Terriglobales</taxon>
        <taxon>Acidobacteriaceae</taxon>
        <taxon>Acidobacterium</taxon>
    </lineage>
</organism>
<proteinExistence type="inferred from homology"/>
<comment type="function">
    <text evidence="1">Located at the top of the head of the 30S subunit, it contacts several helices of the 16S rRNA. In the 70S ribosome it contacts the 23S rRNA (bridge B1a) and protein L5 of the 50S subunit (bridge B1b), connecting the 2 subunits; these bridges are implicated in subunit movement. Contacts the tRNAs in the A and P-sites.</text>
</comment>
<comment type="subunit">
    <text evidence="1">Part of the 30S ribosomal subunit. Forms a loose heterodimer with protein S19. Forms two bridges to the 50S subunit in the 70S ribosome.</text>
</comment>
<comment type="similarity">
    <text evidence="1">Belongs to the universal ribosomal protein uS13 family.</text>
</comment>
<dbReference type="EMBL" id="CP001472">
    <property type="protein sequence ID" value="ACO33891.1"/>
    <property type="molecule type" value="Genomic_DNA"/>
</dbReference>
<dbReference type="RefSeq" id="WP_015896559.1">
    <property type="nucleotide sequence ID" value="NC_012483.1"/>
</dbReference>
<dbReference type="SMR" id="C1F617"/>
<dbReference type="FunCoup" id="C1F617">
    <property type="interactions" value="587"/>
</dbReference>
<dbReference type="STRING" id="240015.ACP_1426"/>
<dbReference type="KEGG" id="aca:ACP_1426"/>
<dbReference type="eggNOG" id="COG0099">
    <property type="taxonomic scope" value="Bacteria"/>
</dbReference>
<dbReference type="HOGENOM" id="CLU_103849_1_2_0"/>
<dbReference type="InParanoid" id="C1F617"/>
<dbReference type="OrthoDB" id="9803610at2"/>
<dbReference type="Proteomes" id="UP000002207">
    <property type="component" value="Chromosome"/>
</dbReference>
<dbReference type="GO" id="GO:0005829">
    <property type="term" value="C:cytosol"/>
    <property type="evidence" value="ECO:0007669"/>
    <property type="project" value="TreeGrafter"/>
</dbReference>
<dbReference type="GO" id="GO:0015935">
    <property type="term" value="C:small ribosomal subunit"/>
    <property type="evidence" value="ECO:0007669"/>
    <property type="project" value="TreeGrafter"/>
</dbReference>
<dbReference type="GO" id="GO:0019843">
    <property type="term" value="F:rRNA binding"/>
    <property type="evidence" value="ECO:0007669"/>
    <property type="project" value="UniProtKB-UniRule"/>
</dbReference>
<dbReference type="GO" id="GO:0003735">
    <property type="term" value="F:structural constituent of ribosome"/>
    <property type="evidence" value="ECO:0007669"/>
    <property type="project" value="InterPro"/>
</dbReference>
<dbReference type="GO" id="GO:0000049">
    <property type="term" value="F:tRNA binding"/>
    <property type="evidence" value="ECO:0007669"/>
    <property type="project" value="UniProtKB-UniRule"/>
</dbReference>
<dbReference type="GO" id="GO:0006412">
    <property type="term" value="P:translation"/>
    <property type="evidence" value="ECO:0007669"/>
    <property type="project" value="UniProtKB-UniRule"/>
</dbReference>
<dbReference type="FunFam" id="1.10.8.50:FF:000001">
    <property type="entry name" value="30S ribosomal protein S13"/>
    <property type="match status" value="1"/>
</dbReference>
<dbReference type="FunFam" id="4.10.910.10:FF:000001">
    <property type="entry name" value="30S ribosomal protein S13"/>
    <property type="match status" value="1"/>
</dbReference>
<dbReference type="Gene3D" id="1.10.8.50">
    <property type="match status" value="1"/>
</dbReference>
<dbReference type="Gene3D" id="4.10.910.10">
    <property type="entry name" value="30s ribosomal protein s13, domain 2"/>
    <property type="match status" value="1"/>
</dbReference>
<dbReference type="HAMAP" id="MF_01315">
    <property type="entry name" value="Ribosomal_uS13"/>
    <property type="match status" value="1"/>
</dbReference>
<dbReference type="InterPro" id="IPR027437">
    <property type="entry name" value="Rbsml_uS13_C"/>
</dbReference>
<dbReference type="InterPro" id="IPR001892">
    <property type="entry name" value="Ribosomal_uS13"/>
</dbReference>
<dbReference type="InterPro" id="IPR010979">
    <property type="entry name" value="Ribosomal_uS13-like_H2TH"/>
</dbReference>
<dbReference type="InterPro" id="IPR019980">
    <property type="entry name" value="Ribosomal_uS13_bac-type"/>
</dbReference>
<dbReference type="InterPro" id="IPR018269">
    <property type="entry name" value="Ribosomal_uS13_CS"/>
</dbReference>
<dbReference type="NCBIfam" id="TIGR03631">
    <property type="entry name" value="uS13_bact"/>
    <property type="match status" value="1"/>
</dbReference>
<dbReference type="PANTHER" id="PTHR10871">
    <property type="entry name" value="30S RIBOSOMAL PROTEIN S13/40S RIBOSOMAL PROTEIN S18"/>
    <property type="match status" value="1"/>
</dbReference>
<dbReference type="PANTHER" id="PTHR10871:SF1">
    <property type="entry name" value="SMALL RIBOSOMAL SUBUNIT PROTEIN US13M"/>
    <property type="match status" value="1"/>
</dbReference>
<dbReference type="Pfam" id="PF00416">
    <property type="entry name" value="Ribosomal_S13"/>
    <property type="match status" value="1"/>
</dbReference>
<dbReference type="PIRSF" id="PIRSF002134">
    <property type="entry name" value="Ribosomal_S13"/>
    <property type="match status" value="1"/>
</dbReference>
<dbReference type="SUPFAM" id="SSF46946">
    <property type="entry name" value="S13-like H2TH domain"/>
    <property type="match status" value="1"/>
</dbReference>
<dbReference type="PROSITE" id="PS00646">
    <property type="entry name" value="RIBOSOMAL_S13_1"/>
    <property type="match status" value="1"/>
</dbReference>
<dbReference type="PROSITE" id="PS50159">
    <property type="entry name" value="RIBOSOMAL_S13_2"/>
    <property type="match status" value="1"/>
</dbReference>
<keyword id="KW-1185">Reference proteome</keyword>
<keyword id="KW-0687">Ribonucleoprotein</keyword>
<keyword id="KW-0689">Ribosomal protein</keyword>
<keyword id="KW-0694">RNA-binding</keyword>
<keyword id="KW-0699">rRNA-binding</keyword>
<keyword id="KW-0820">tRNA-binding</keyword>
<evidence type="ECO:0000255" key="1">
    <source>
        <dbReference type="HAMAP-Rule" id="MF_01315"/>
    </source>
</evidence>
<evidence type="ECO:0000256" key="2">
    <source>
        <dbReference type="SAM" id="MobiDB-lite"/>
    </source>
</evidence>
<evidence type="ECO:0000305" key="3"/>